<name>DNAA_THEP1</name>
<keyword id="KW-0067">ATP-binding</keyword>
<keyword id="KW-0963">Cytoplasm</keyword>
<keyword id="KW-0235">DNA replication</keyword>
<keyword id="KW-0238">DNA-binding</keyword>
<keyword id="KW-0446">Lipid-binding</keyword>
<keyword id="KW-0547">Nucleotide-binding</keyword>
<comment type="function">
    <text evidence="1">Plays an essential role in the initiation and regulation of chromosomal replication. ATP-DnaA binds to the origin of replication (oriC) to initiate formation of the DNA replication initiation complex once per cell cycle. Binds the DnaA box (a 9 base pair repeat at the origin) and separates the double-stranded (ds)DNA. Forms a right-handed helical filament on oriC DNA; dsDNA binds to the exterior of the filament while single-stranded (ss)DNA is stabiized in the filament's interior. The ATP-DnaA-oriC complex binds and stabilizes one strand of the AT-rich DNA unwinding element (DUE), permitting loading of DNA polymerase. After initiation quickly degrades to an ADP-DnaA complex that is not apt for DNA replication. Binds acidic phospholipids.</text>
</comment>
<comment type="subunit">
    <text evidence="1">Oligomerizes as a right-handed, spiral filament on DNA at oriC.</text>
</comment>
<comment type="subcellular location">
    <subcellularLocation>
        <location evidence="1">Cytoplasm</location>
    </subcellularLocation>
</comment>
<comment type="domain">
    <text evidence="1">Domain I is involved in oligomerization and binding regulators, domain II is flexibile and of varying length in different bacteria, domain III forms the AAA+ region, while domain IV binds dsDNA.</text>
</comment>
<comment type="similarity">
    <text evidence="1">Belongs to the DnaA family.</text>
</comment>
<evidence type="ECO:0000255" key="1">
    <source>
        <dbReference type="HAMAP-Rule" id="MF_00377"/>
    </source>
</evidence>
<organism>
    <name type="scientific">Thermotoga petrophila (strain ATCC BAA-488 / DSM 13995 / JCM 10881 / RKU-1)</name>
    <dbReference type="NCBI Taxonomy" id="390874"/>
    <lineage>
        <taxon>Bacteria</taxon>
        <taxon>Thermotogati</taxon>
        <taxon>Thermotogota</taxon>
        <taxon>Thermotogae</taxon>
        <taxon>Thermotogales</taxon>
        <taxon>Thermotogaceae</taxon>
        <taxon>Thermotoga</taxon>
    </lineage>
</organism>
<protein>
    <recommendedName>
        <fullName evidence="1">Chromosomal replication initiator protein DnaA</fullName>
    </recommendedName>
</protein>
<reference key="1">
    <citation type="submission" date="2007-05" db="EMBL/GenBank/DDBJ databases">
        <title>Complete sequence of Thermotoga petrophila RKU-1.</title>
        <authorList>
            <consortium name="US DOE Joint Genome Institute"/>
            <person name="Copeland A."/>
            <person name="Lucas S."/>
            <person name="Lapidus A."/>
            <person name="Barry K."/>
            <person name="Glavina del Rio T."/>
            <person name="Dalin E."/>
            <person name="Tice H."/>
            <person name="Pitluck S."/>
            <person name="Sims D."/>
            <person name="Brettin T."/>
            <person name="Bruce D."/>
            <person name="Detter J.C."/>
            <person name="Han C."/>
            <person name="Tapia R."/>
            <person name="Schmutz J."/>
            <person name="Larimer F."/>
            <person name="Land M."/>
            <person name="Hauser L."/>
            <person name="Kyrpides N."/>
            <person name="Mikhailova N."/>
            <person name="Nelson K."/>
            <person name="Gogarten J.P."/>
            <person name="Noll K."/>
            <person name="Richardson P."/>
        </authorList>
    </citation>
    <scope>NUCLEOTIDE SEQUENCE [LARGE SCALE GENOMIC DNA]</scope>
    <source>
        <strain>ATCC BAA-488 / DSM 13995 / JCM 10881 / RKU-1</strain>
    </source>
</reference>
<accession>A5IIK7</accession>
<dbReference type="EMBL" id="CP000702">
    <property type="protein sequence ID" value="ABQ46030.1"/>
    <property type="molecule type" value="Genomic_DNA"/>
</dbReference>
<dbReference type="RefSeq" id="WP_011942708.1">
    <property type="nucleotide sequence ID" value="NC_009486.1"/>
</dbReference>
<dbReference type="SMR" id="A5IIK7"/>
<dbReference type="STRING" id="390874.Tpet_0001"/>
<dbReference type="KEGG" id="tpt:Tpet_0001"/>
<dbReference type="eggNOG" id="COG0593">
    <property type="taxonomic scope" value="Bacteria"/>
</dbReference>
<dbReference type="HOGENOM" id="CLU_026910_3_2_0"/>
<dbReference type="Proteomes" id="UP000006558">
    <property type="component" value="Chromosome"/>
</dbReference>
<dbReference type="GO" id="GO:0005737">
    <property type="term" value="C:cytoplasm"/>
    <property type="evidence" value="ECO:0007669"/>
    <property type="project" value="UniProtKB-SubCell"/>
</dbReference>
<dbReference type="GO" id="GO:0005886">
    <property type="term" value="C:plasma membrane"/>
    <property type="evidence" value="ECO:0007669"/>
    <property type="project" value="TreeGrafter"/>
</dbReference>
<dbReference type="GO" id="GO:0005524">
    <property type="term" value="F:ATP binding"/>
    <property type="evidence" value="ECO:0007669"/>
    <property type="project" value="UniProtKB-UniRule"/>
</dbReference>
<dbReference type="GO" id="GO:0016887">
    <property type="term" value="F:ATP hydrolysis activity"/>
    <property type="evidence" value="ECO:0007669"/>
    <property type="project" value="InterPro"/>
</dbReference>
<dbReference type="GO" id="GO:0003688">
    <property type="term" value="F:DNA replication origin binding"/>
    <property type="evidence" value="ECO:0007669"/>
    <property type="project" value="UniProtKB-UniRule"/>
</dbReference>
<dbReference type="GO" id="GO:0008289">
    <property type="term" value="F:lipid binding"/>
    <property type="evidence" value="ECO:0007669"/>
    <property type="project" value="UniProtKB-KW"/>
</dbReference>
<dbReference type="GO" id="GO:0006270">
    <property type="term" value="P:DNA replication initiation"/>
    <property type="evidence" value="ECO:0007669"/>
    <property type="project" value="UniProtKB-UniRule"/>
</dbReference>
<dbReference type="GO" id="GO:0006275">
    <property type="term" value="P:regulation of DNA replication"/>
    <property type="evidence" value="ECO:0007669"/>
    <property type="project" value="UniProtKB-UniRule"/>
</dbReference>
<dbReference type="CDD" id="cd00009">
    <property type="entry name" value="AAA"/>
    <property type="match status" value="1"/>
</dbReference>
<dbReference type="CDD" id="cd06571">
    <property type="entry name" value="Bac_DnaA_C"/>
    <property type="match status" value="1"/>
</dbReference>
<dbReference type="FunFam" id="3.40.50.300:FF:000668">
    <property type="entry name" value="Chromosomal replication initiator protein DnaA"/>
    <property type="match status" value="1"/>
</dbReference>
<dbReference type="Gene3D" id="1.10.1750.10">
    <property type="match status" value="1"/>
</dbReference>
<dbReference type="Gene3D" id="1.10.8.60">
    <property type="match status" value="1"/>
</dbReference>
<dbReference type="Gene3D" id="3.30.300.180">
    <property type="match status" value="1"/>
</dbReference>
<dbReference type="Gene3D" id="3.40.50.300">
    <property type="entry name" value="P-loop containing nucleotide triphosphate hydrolases"/>
    <property type="match status" value="1"/>
</dbReference>
<dbReference type="HAMAP" id="MF_00377">
    <property type="entry name" value="DnaA_bact"/>
    <property type="match status" value="1"/>
</dbReference>
<dbReference type="InterPro" id="IPR003593">
    <property type="entry name" value="AAA+_ATPase"/>
</dbReference>
<dbReference type="InterPro" id="IPR001957">
    <property type="entry name" value="Chromosome_initiator_DnaA"/>
</dbReference>
<dbReference type="InterPro" id="IPR020591">
    <property type="entry name" value="Chromosome_initiator_DnaA-like"/>
</dbReference>
<dbReference type="InterPro" id="IPR018312">
    <property type="entry name" value="Chromosome_initiator_DnaA_CS"/>
</dbReference>
<dbReference type="InterPro" id="IPR013159">
    <property type="entry name" value="DnaA_C"/>
</dbReference>
<dbReference type="InterPro" id="IPR013317">
    <property type="entry name" value="DnaA_dom"/>
</dbReference>
<dbReference type="InterPro" id="IPR024633">
    <property type="entry name" value="DnaA_N_dom"/>
</dbReference>
<dbReference type="InterPro" id="IPR038454">
    <property type="entry name" value="DnaA_N_sf"/>
</dbReference>
<dbReference type="InterPro" id="IPR027417">
    <property type="entry name" value="P-loop_NTPase"/>
</dbReference>
<dbReference type="InterPro" id="IPR010921">
    <property type="entry name" value="Trp_repressor/repl_initiator"/>
</dbReference>
<dbReference type="NCBIfam" id="TIGR00362">
    <property type="entry name" value="DnaA"/>
    <property type="match status" value="1"/>
</dbReference>
<dbReference type="PANTHER" id="PTHR30050">
    <property type="entry name" value="CHROMOSOMAL REPLICATION INITIATOR PROTEIN DNAA"/>
    <property type="match status" value="1"/>
</dbReference>
<dbReference type="PANTHER" id="PTHR30050:SF2">
    <property type="entry name" value="CHROMOSOMAL REPLICATION INITIATOR PROTEIN DNAA"/>
    <property type="match status" value="1"/>
</dbReference>
<dbReference type="Pfam" id="PF00308">
    <property type="entry name" value="Bac_DnaA"/>
    <property type="match status" value="1"/>
</dbReference>
<dbReference type="Pfam" id="PF08299">
    <property type="entry name" value="Bac_DnaA_C"/>
    <property type="match status" value="1"/>
</dbReference>
<dbReference type="Pfam" id="PF11638">
    <property type="entry name" value="DnaA_N"/>
    <property type="match status" value="1"/>
</dbReference>
<dbReference type="PRINTS" id="PR00051">
    <property type="entry name" value="DNAA"/>
</dbReference>
<dbReference type="SMART" id="SM00382">
    <property type="entry name" value="AAA"/>
    <property type="match status" value="1"/>
</dbReference>
<dbReference type="SMART" id="SM00760">
    <property type="entry name" value="Bac_DnaA_C"/>
    <property type="match status" value="1"/>
</dbReference>
<dbReference type="SUPFAM" id="SSF52540">
    <property type="entry name" value="P-loop containing nucleoside triphosphate hydrolases"/>
    <property type="match status" value="1"/>
</dbReference>
<dbReference type="SUPFAM" id="SSF48295">
    <property type="entry name" value="TrpR-like"/>
    <property type="match status" value="1"/>
</dbReference>
<dbReference type="PROSITE" id="PS01008">
    <property type="entry name" value="DNAA"/>
    <property type="match status" value="1"/>
</dbReference>
<gene>
    <name evidence="1" type="primary">dnaA</name>
    <name type="ordered locus">Tpet_0001</name>
</gene>
<feature type="chain" id="PRO_1000048753" description="Chromosomal replication initiator protein DnaA">
    <location>
        <begin position="1"/>
        <end position="440"/>
    </location>
</feature>
<feature type="region of interest" description="Domain I, interacts with DnaA modulators" evidence="1">
    <location>
        <begin position="1"/>
        <end position="69"/>
    </location>
</feature>
<feature type="region of interest" description="Domain II" evidence="1">
    <location>
        <begin position="69"/>
        <end position="96"/>
    </location>
</feature>
<feature type="region of interest" description="Domain III, AAA+ region" evidence="1">
    <location>
        <begin position="97"/>
        <end position="313"/>
    </location>
</feature>
<feature type="region of interest" description="Domain IV, binds dsDNA" evidence="1">
    <location>
        <begin position="314"/>
        <end position="440"/>
    </location>
</feature>
<feature type="binding site" evidence="1">
    <location>
        <position position="140"/>
    </location>
    <ligand>
        <name>ATP</name>
        <dbReference type="ChEBI" id="CHEBI:30616"/>
    </ligand>
</feature>
<feature type="binding site" evidence="1">
    <location>
        <position position="142"/>
    </location>
    <ligand>
        <name>ATP</name>
        <dbReference type="ChEBI" id="CHEBI:30616"/>
    </ligand>
</feature>
<feature type="binding site" evidence="1">
    <location>
        <position position="143"/>
    </location>
    <ligand>
        <name>ATP</name>
        <dbReference type="ChEBI" id="CHEBI:30616"/>
    </ligand>
</feature>
<feature type="binding site" evidence="1">
    <location>
        <position position="144"/>
    </location>
    <ligand>
        <name>ATP</name>
        <dbReference type="ChEBI" id="CHEBI:30616"/>
    </ligand>
</feature>
<sequence>MKERILQEIKTRVNRKSWELWFSSFDVRSIEGNKVVFSVGNLFIKEWLEKKYHSVLSKAVKVVLGNDATFEITYEAFEPHSSYSEPLVKKRAVLLTPLNPDYTFENFVVGPGNSFAYHAALEVAKHPGRYNPLFIYGGVGLGKTHLLQSIGNYVVQNEPDLRVMYITSEKFLNDLVDSMKEGKLNEFREKYRKKVDILLIDDVQFLIGKTGVQTELFHTFNELHDSGKQIVICSDREPQKLSEFQDRLVSRFQMGLVAKLEPPDEETRKSIAKKMLEIEHGELPEEVLNFVAENVDDNLRRLRGAIIKLLVYKETTGKEVDLREAILLLKDFIKPNRVKAMDPIDELIEIVAKVTGVSREEILSNNRNVKALTARRIGMYVAKNHLNSSLRTIAEKFNRSHPVVLDSVKRVKDSLLKGNKQLKSLIDEVIGEISKRALSG</sequence>
<proteinExistence type="inferred from homology"/>